<organism>
    <name type="scientific">Yersinia pestis</name>
    <dbReference type="NCBI Taxonomy" id="632"/>
    <lineage>
        <taxon>Bacteria</taxon>
        <taxon>Pseudomonadati</taxon>
        <taxon>Pseudomonadota</taxon>
        <taxon>Gammaproteobacteria</taxon>
        <taxon>Enterobacterales</taxon>
        <taxon>Yersiniaceae</taxon>
        <taxon>Yersinia</taxon>
    </lineage>
</organism>
<dbReference type="EMBL" id="AL590842">
    <property type="protein sequence ID" value="CAL19921.1"/>
    <property type="molecule type" value="Genomic_DNA"/>
</dbReference>
<dbReference type="EMBL" id="AE009952">
    <property type="protein sequence ID" value="AAM86471.1"/>
    <property type="molecule type" value="Genomic_DNA"/>
</dbReference>
<dbReference type="EMBL" id="AE017042">
    <property type="protein sequence ID" value="AAS61567.1"/>
    <property type="molecule type" value="Genomic_DNA"/>
</dbReference>
<dbReference type="PIR" id="AG0154">
    <property type="entry name" value="AG0154"/>
</dbReference>
<dbReference type="RefSeq" id="WP_002208834.1">
    <property type="nucleotide sequence ID" value="NZ_WUCM01000013.1"/>
</dbReference>
<dbReference type="RefSeq" id="YP_002346293.1">
    <property type="nucleotide sequence ID" value="NC_003143.1"/>
</dbReference>
<dbReference type="SMR" id="Q8ZGM4"/>
<dbReference type="STRING" id="214092.YPO1264"/>
<dbReference type="PaxDb" id="214092-YPO1264"/>
<dbReference type="DNASU" id="1147867"/>
<dbReference type="EnsemblBacteria" id="AAS61567">
    <property type="protein sequence ID" value="AAS61567"/>
    <property type="gene ID" value="YP_1324"/>
</dbReference>
<dbReference type="GeneID" id="96664865"/>
<dbReference type="KEGG" id="ype:YPO1264"/>
<dbReference type="KEGG" id="ypk:y2920"/>
<dbReference type="KEGG" id="ypm:YP_1324"/>
<dbReference type="PATRIC" id="fig|214092.21.peg.1569"/>
<dbReference type="eggNOG" id="COG1825">
    <property type="taxonomic scope" value="Bacteria"/>
</dbReference>
<dbReference type="HOGENOM" id="CLU_137946_0_0_6"/>
<dbReference type="OMA" id="DHDKVWN"/>
<dbReference type="OrthoDB" id="9806411at2"/>
<dbReference type="Proteomes" id="UP000000815">
    <property type="component" value="Chromosome"/>
</dbReference>
<dbReference type="Proteomes" id="UP000001019">
    <property type="component" value="Chromosome"/>
</dbReference>
<dbReference type="Proteomes" id="UP000002490">
    <property type="component" value="Chromosome"/>
</dbReference>
<dbReference type="GO" id="GO:0022625">
    <property type="term" value="C:cytosolic large ribosomal subunit"/>
    <property type="evidence" value="ECO:0000318"/>
    <property type="project" value="GO_Central"/>
</dbReference>
<dbReference type="GO" id="GO:0008097">
    <property type="term" value="F:5S rRNA binding"/>
    <property type="evidence" value="ECO:0000318"/>
    <property type="project" value="GO_Central"/>
</dbReference>
<dbReference type="GO" id="GO:0003735">
    <property type="term" value="F:structural constituent of ribosome"/>
    <property type="evidence" value="ECO:0007669"/>
    <property type="project" value="InterPro"/>
</dbReference>
<dbReference type="GO" id="GO:0006412">
    <property type="term" value="P:translation"/>
    <property type="evidence" value="ECO:0000318"/>
    <property type="project" value="GO_Central"/>
</dbReference>
<dbReference type="CDD" id="cd00495">
    <property type="entry name" value="Ribosomal_L25_TL5_CTC"/>
    <property type="match status" value="1"/>
</dbReference>
<dbReference type="FunFam" id="2.40.240.10:FF:000002">
    <property type="entry name" value="50S ribosomal protein L25"/>
    <property type="match status" value="1"/>
</dbReference>
<dbReference type="Gene3D" id="2.40.240.10">
    <property type="entry name" value="Ribosomal Protein L25, Chain P"/>
    <property type="match status" value="1"/>
</dbReference>
<dbReference type="HAMAP" id="MF_01336">
    <property type="entry name" value="Ribosomal_bL25"/>
    <property type="match status" value="1"/>
</dbReference>
<dbReference type="InterPro" id="IPR020056">
    <property type="entry name" value="Rbsml_bL25/Gln-tRNA_synth_N"/>
</dbReference>
<dbReference type="InterPro" id="IPR011035">
    <property type="entry name" value="Ribosomal_bL25/Gln-tRNA_synth"/>
</dbReference>
<dbReference type="InterPro" id="IPR020055">
    <property type="entry name" value="Ribosomal_bL25_short"/>
</dbReference>
<dbReference type="InterPro" id="IPR029751">
    <property type="entry name" value="Ribosomal_L25_dom"/>
</dbReference>
<dbReference type="InterPro" id="IPR020930">
    <property type="entry name" value="Ribosomal_uL5_bac-type"/>
</dbReference>
<dbReference type="NCBIfam" id="NF004612">
    <property type="entry name" value="PRK05943.1"/>
    <property type="match status" value="1"/>
</dbReference>
<dbReference type="PANTHER" id="PTHR33284">
    <property type="entry name" value="RIBOSOMAL PROTEIN L25/GLN-TRNA SYNTHETASE, ANTI-CODON-BINDING DOMAIN-CONTAINING PROTEIN"/>
    <property type="match status" value="1"/>
</dbReference>
<dbReference type="PANTHER" id="PTHR33284:SF1">
    <property type="entry name" value="RIBOSOMAL PROTEIN L25_GLN-TRNA SYNTHETASE, ANTI-CODON-BINDING DOMAIN-CONTAINING PROTEIN"/>
    <property type="match status" value="1"/>
</dbReference>
<dbReference type="Pfam" id="PF01386">
    <property type="entry name" value="Ribosomal_L25p"/>
    <property type="match status" value="1"/>
</dbReference>
<dbReference type="SUPFAM" id="SSF50715">
    <property type="entry name" value="Ribosomal protein L25-like"/>
    <property type="match status" value="1"/>
</dbReference>
<feature type="chain" id="PRO_0000181503" description="Large ribosomal subunit protein bL25">
    <location>
        <begin position="1"/>
        <end position="94"/>
    </location>
</feature>
<comment type="function">
    <text evidence="1">This is one of the proteins that binds to the 5S RNA in the ribosome where it forms part of the central protuberance.</text>
</comment>
<comment type="subunit">
    <text evidence="1">Part of the 50S ribosomal subunit; part of the 5S rRNA/L5/L18/L25 subcomplex. Contacts the 5S rRNA. Binds to the 5S rRNA independently of L5 and L18.</text>
</comment>
<comment type="similarity">
    <text evidence="1">Belongs to the bacterial ribosomal protein bL25 family.</text>
</comment>
<protein>
    <recommendedName>
        <fullName evidence="1">Large ribosomal subunit protein bL25</fullName>
    </recommendedName>
    <alternativeName>
        <fullName evidence="2">50S ribosomal protein L25</fullName>
    </alternativeName>
</protein>
<accession>Q8ZGM4</accession>
<accession>Q0WHE5</accession>
<accession>Q74VI4</accession>
<accession>Q7CHC6</accession>
<gene>
    <name evidence="1" type="primary">rplY</name>
    <name type="ordered locus">YPO1264</name>
    <name type="ordered locus">y2920</name>
    <name type="ordered locus">YP_1324</name>
</gene>
<name>RL25_YERPE</name>
<sequence length="94" mass="10406">MTTINVEVRNDQGKGASRRLRAANKFPAIVYGGSEAAISIALDHDTTKNLELKPGFYDSVLTLVIDGKETKVKVQAVQRHAFKPKLTHIDFVRV</sequence>
<evidence type="ECO:0000255" key="1">
    <source>
        <dbReference type="HAMAP-Rule" id="MF_01336"/>
    </source>
</evidence>
<evidence type="ECO:0000305" key="2"/>
<proteinExistence type="inferred from homology"/>
<keyword id="KW-1185">Reference proteome</keyword>
<keyword id="KW-0687">Ribonucleoprotein</keyword>
<keyword id="KW-0689">Ribosomal protein</keyword>
<keyword id="KW-0694">RNA-binding</keyword>
<keyword id="KW-0699">rRNA-binding</keyword>
<reference key="1">
    <citation type="journal article" date="2001" name="Nature">
        <title>Genome sequence of Yersinia pestis, the causative agent of plague.</title>
        <authorList>
            <person name="Parkhill J."/>
            <person name="Wren B.W."/>
            <person name="Thomson N.R."/>
            <person name="Titball R.W."/>
            <person name="Holden M.T.G."/>
            <person name="Prentice M.B."/>
            <person name="Sebaihia M."/>
            <person name="James K.D."/>
            <person name="Churcher C.M."/>
            <person name="Mungall K.L."/>
            <person name="Baker S."/>
            <person name="Basham D."/>
            <person name="Bentley S.D."/>
            <person name="Brooks K."/>
            <person name="Cerdeno-Tarraga A.-M."/>
            <person name="Chillingworth T."/>
            <person name="Cronin A."/>
            <person name="Davies R.M."/>
            <person name="Davis P."/>
            <person name="Dougan G."/>
            <person name="Feltwell T."/>
            <person name="Hamlin N."/>
            <person name="Holroyd S."/>
            <person name="Jagels K."/>
            <person name="Karlyshev A.V."/>
            <person name="Leather S."/>
            <person name="Moule S."/>
            <person name="Oyston P.C.F."/>
            <person name="Quail M.A."/>
            <person name="Rutherford K.M."/>
            <person name="Simmonds M."/>
            <person name="Skelton J."/>
            <person name="Stevens K."/>
            <person name="Whitehead S."/>
            <person name="Barrell B.G."/>
        </authorList>
    </citation>
    <scope>NUCLEOTIDE SEQUENCE [LARGE SCALE GENOMIC DNA]</scope>
    <source>
        <strain>CO-92 / Biovar Orientalis</strain>
    </source>
</reference>
<reference key="2">
    <citation type="journal article" date="2002" name="J. Bacteriol.">
        <title>Genome sequence of Yersinia pestis KIM.</title>
        <authorList>
            <person name="Deng W."/>
            <person name="Burland V."/>
            <person name="Plunkett G. III"/>
            <person name="Boutin A."/>
            <person name="Mayhew G.F."/>
            <person name="Liss P."/>
            <person name="Perna N.T."/>
            <person name="Rose D.J."/>
            <person name="Mau B."/>
            <person name="Zhou S."/>
            <person name="Schwartz D.C."/>
            <person name="Fetherston J.D."/>
            <person name="Lindler L.E."/>
            <person name="Brubaker R.R."/>
            <person name="Plano G.V."/>
            <person name="Straley S.C."/>
            <person name="McDonough K.A."/>
            <person name="Nilles M.L."/>
            <person name="Matson J.S."/>
            <person name="Blattner F.R."/>
            <person name="Perry R.D."/>
        </authorList>
    </citation>
    <scope>NUCLEOTIDE SEQUENCE [LARGE SCALE GENOMIC DNA]</scope>
    <source>
        <strain>KIM10+ / Biovar Mediaevalis</strain>
    </source>
</reference>
<reference key="3">
    <citation type="journal article" date="2004" name="DNA Res.">
        <title>Complete genome sequence of Yersinia pestis strain 91001, an isolate avirulent to humans.</title>
        <authorList>
            <person name="Song Y."/>
            <person name="Tong Z."/>
            <person name="Wang J."/>
            <person name="Wang L."/>
            <person name="Guo Z."/>
            <person name="Han Y."/>
            <person name="Zhang J."/>
            <person name="Pei D."/>
            <person name="Zhou D."/>
            <person name="Qin H."/>
            <person name="Pang X."/>
            <person name="Han Y."/>
            <person name="Zhai J."/>
            <person name="Li M."/>
            <person name="Cui B."/>
            <person name="Qi Z."/>
            <person name="Jin L."/>
            <person name="Dai R."/>
            <person name="Chen F."/>
            <person name="Li S."/>
            <person name="Ye C."/>
            <person name="Du Z."/>
            <person name="Lin W."/>
            <person name="Wang J."/>
            <person name="Yu J."/>
            <person name="Yang H."/>
            <person name="Wang J."/>
            <person name="Huang P."/>
            <person name="Yang R."/>
        </authorList>
    </citation>
    <scope>NUCLEOTIDE SEQUENCE [LARGE SCALE GENOMIC DNA]</scope>
    <source>
        <strain>91001 / Biovar Mediaevalis</strain>
    </source>
</reference>